<name>PHS_SHEB2</name>
<keyword id="KW-0456">Lyase</keyword>
<proteinExistence type="inferred from homology"/>
<comment type="catalytic activity">
    <reaction evidence="1">
        <text>(4aS,6R)-4a-hydroxy-L-erythro-5,6,7,8-tetrahydrobiopterin = (6R)-L-erythro-6,7-dihydrobiopterin + H2O</text>
        <dbReference type="Rhea" id="RHEA:11920"/>
        <dbReference type="ChEBI" id="CHEBI:15377"/>
        <dbReference type="ChEBI" id="CHEBI:15642"/>
        <dbReference type="ChEBI" id="CHEBI:43120"/>
        <dbReference type="EC" id="4.2.1.96"/>
    </reaction>
</comment>
<comment type="similarity">
    <text evidence="1">Belongs to the pterin-4-alpha-carbinolamine dehydratase family.</text>
</comment>
<gene>
    <name type="ordered locus">Sbal223_2867</name>
</gene>
<evidence type="ECO:0000255" key="1">
    <source>
        <dbReference type="HAMAP-Rule" id="MF_00434"/>
    </source>
</evidence>
<protein>
    <recommendedName>
        <fullName evidence="1">Putative pterin-4-alpha-carbinolamine dehydratase</fullName>
        <shortName evidence="1">PHS</shortName>
        <ecNumber evidence="1">4.2.1.96</ecNumber>
    </recommendedName>
    <alternativeName>
        <fullName evidence="1">4-alpha-hydroxy-tetrahydropterin dehydratase</fullName>
    </alternativeName>
    <alternativeName>
        <fullName evidence="1">Pterin carbinolamine dehydratase</fullName>
        <shortName evidence="1">PCD</shortName>
    </alternativeName>
</protein>
<dbReference type="EC" id="4.2.1.96" evidence="1"/>
<dbReference type="EMBL" id="CP001252">
    <property type="protein sequence ID" value="ACK47353.1"/>
    <property type="molecule type" value="Genomic_DNA"/>
</dbReference>
<dbReference type="RefSeq" id="WP_006081014.1">
    <property type="nucleotide sequence ID" value="NC_011663.1"/>
</dbReference>
<dbReference type="SMR" id="B8E7N1"/>
<dbReference type="KEGG" id="sbp:Sbal223_2867"/>
<dbReference type="HOGENOM" id="CLU_081974_2_2_6"/>
<dbReference type="Proteomes" id="UP000002507">
    <property type="component" value="Chromosome"/>
</dbReference>
<dbReference type="GO" id="GO:0008124">
    <property type="term" value="F:4-alpha-hydroxytetrahydrobiopterin dehydratase activity"/>
    <property type="evidence" value="ECO:0007669"/>
    <property type="project" value="UniProtKB-UniRule"/>
</dbReference>
<dbReference type="GO" id="GO:0006729">
    <property type="term" value="P:tetrahydrobiopterin biosynthetic process"/>
    <property type="evidence" value="ECO:0007669"/>
    <property type="project" value="InterPro"/>
</dbReference>
<dbReference type="CDD" id="cd00913">
    <property type="entry name" value="PCD_DCoH_subfamily_a"/>
    <property type="match status" value="1"/>
</dbReference>
<dbReference type="Gene3D" id="3.30.1360.20">
    <property type="entry name" value="Transcriptional coactivator/pterin dehydratase"/>
    <property type="match status" value="1"/>
</dbReference>
<dbReference type="HAMAP" id="MF_00434">
    <property type="entry name" value="Pterin_4_alpha"/>
    <property type="match status" value="1"/>
</dbReference>
<dbReference type="InterPro" id="IPR036428">
    <property type="entry name" value="PCD_sf"/>
</dbReference>
<dbReference type="InterPro" id="IPR050376">
    <property type="entry name" value="Pterin-4-alpha-carb_dehyd"/>
</dbReference>
<dbReference type="InterPro" id="IPR001533">
    <property type="entry name" value="Pterin_deHydtase"/>
</dbReference>
<dbReference type="NCBIfam" id="NF002016">
    <property type="entry name" value="PRK00823.1-1"/>
    <property type="match status" value="1"/>
</dbReference>
<dbReference type="PANTHER" id="PTHR42805">
    <property type="entry name" value="PTERIN-4-ALPHA-CARBINOLAMINE DEHYDRATASE-RELATED"/>
    <property type="match status" value="1"/>
</dbReference>
<dbReference type="PANTHER" id="PTHR42805:SF1">
    <property type="entry name" value="PTERIN-4-ALPHA-CARBINOLAMINE DEHYDRATASE-RELATED"/>
    <property type="match status" value="1"/>
</dbReference>
<dbReference type="Pfam" id="PF01329">
    <property type="entry name" value="Pterin_4a"/>
    <property type="match status" value="1"/>
</dbReference>
<dbReference type="SUPFAM" id="SSF55248">
    <property type="entry name" value="PCD-like"/>
    <property type="match status" value="1"/>
</dbReference>
<accession>B8E7N1</accession>
<sequence length="112" mass="12856">MTALSNMKCEACQADAPKVTDEELAELIRMIPDWGVQVRDGVMQLERVYKFKNFKLAMAFTNKLADLAEEEFHHPGIFTEWGKVTVTWWSHSIKGLHKNDFIMAAKTDQLLV</sequence>
<organism>
    <name type="scientific">Shewanella baltica (strain OS223)</name>
    <dbReference type="NCBI Taxonomy" id="407976"/>
    <lineage>
        <taxon>Bacteria</taxon>
        <taxon>Pseudomonadati</taxon>
        <taxon>Pseudomonadota</taxon>
        <taxon>Gammaproteobacteria</taxon>
        <taxon>Alteromonadales</taxon>
        <taxon>Shewanellaceae</taxon>
        <taxon>Shewanella</taxon>
    </lineage>
</organism>
<feature type="chain" id="PRO_1000192935" description="Putative pterin-4-alpha-carbinolamine dehydratase">
    <location>
        <begin position="1"/>
        <end position="112"/>
    </location>
</feature>
<reference key="1">
    <citation type="submission" date="2008-12" db="EMBL/GenBank/DDBJ databases">
        <title>Complete sequence of chromosome of Shewanella baltica OS223.</title>
        <authorList>
            <consortium name="US DOE Joint Genome Institute"/>
            <person name="Lucas S."/>
            <person name="Copeland A."/>
            <person name="Lapidus A."/>
            <person name="Glavina del Rio T."/>
            <person name="Dalin E."/>
            <person name="Tice H."/>
            <person name="Bruce D."/>
            <person name="Goodwin L."/>
            <person name="Pitluck S."/>
            <person name="Chertkov O."/>
            <person name="Meincke L."/>
            <person name="Brettin T."/>
            <person name="Detter J.C."/>
            <person name="Han C."/>
            <person name="Kuske C.R."/>
            <person name="Larimer F."/>
            <person name="Land M."/>
            <person name="Hauser L."/>
            <person name="Kyrpides N."/>
            <person name="Ovchinnikova G."/>
            <person name="Brettar I."/>
            <person name="Rodrigues J."/>
            <person name="Konstantinidis K."/>
            <person name="Tiedje J."/>
        </authorList>
    </citation>
    <scope>NUCLEOTIDE SEQUENCE [LARGE SCALE GENOMIC DNA]</scope>
    <source>
        <strain>OS223</strain>
    </source>
</reference>